<accession>Q6PIV2</accession>
<accession>B0YJ15</accession>
<accession>Q08AS8</accession>
<accession>Q86UT9</accession>
<accession>Q8IXX2</accession>
<reference key="1">
    <citation type="submission" date="2002-10" db="EMBL/GenBank/DDBJ databases">
        <title>Identification of a 500-kb region of common allelic loss in chromosome 11q23 in non-MYCN amplified type of neuroblastoma.</title>
        <authorList>
            <person name="Kubo T."/>
            <person name="Arai Y."/>
            <person name="Ohira M."/>
            <person name="Gamou T."/>
            <person name="Maeno G."/>
            <person name="Sakiyama T."/>
            <person name="Toyoda A."/>
            <person name="Hattori M."/>
            <person name="Sakaki Y."/>
            <person name="Nakagawara A."/>
            <person name="Ohki M."/>
        </authorList>
    </citation>
    <scope>NUCLEOTIDE SEQUENCE [MRNA] (ISOFORM 1)</scope>
</reference>
<reference key="2">
    <citation type="submission" date="2007-02" db="EMBL/GenBank/DDBJ databases">
        <authorList>
            <consortium name="NHLBI resequencing and genotyping service (RS&amp;G)"/>
        </authorList>
    </citation>
    <scope>NUCLEOTIDE SEQUENCE [GENOMIC DNA]</scope>
</reference>
<reference key="3">
    <citation type="journal article" date="2006" name="Nature">
        <title>Human chromosome 11 DNA sequence and analysis including novel gene identification.</title>
        <authorList>
            <person name="Taylor T.D."/>
            <person name="Noguchi H."/>
            <person name="Totoki Y."/>
            <person name="Toyoda A."/>
            <person name="Kuroki Y."/>
            <person name="Dewar K."/>
            <person name="Lloyd C."/>
            <person name="Itoh T."/>
            <person name="Takeda T."/>
            <person name="Kim D.-W."/>
            <person name="She X."/>
            <person name="Barlow K.F."/>
            <person name="Bloom T."/>
            <person name="Bruford E."/>
            <person name="Chang J.L."/>
            <person name="Cuomo C.A."/>
            <person name="Eichler E."/>
            <person name="FitzGerald M.G."/>
            <person name="Jaffe D.B."/>
            <person name="LaButti K."/>
            <person name="Nicol R."/>
            <person name="Park H.-S."/>
            <person name="Seaman C."/>
            <person name="Sougnez C."/>
            <person name="Yang X."/>
            <person name="Zimmer A.R."/>
            <person name="Zody M.C."/>
            <person name="Birren B.W."/>
            <person name="Nusbaum C."/>
            <person name="Fujiyama A."/>
            <person name="Hattori M."/>
            <person name="Rogers J."/>
            <person name="Lander E.S."/>
            <person name="Sakaki Y."/>
        </authorList>
    </citation>
    <scope>NUCLEOTIDE SEQUENCE [LARGE SCALE GENOMIC DNA]</scope>
</reference>
<reference key="4">
    <citation type="journal article" date="2004" name="Genome Res.">
        <title>The status, quality, and expansion of the NIH full-length cDNA project: the Mammalian Gene Collection (MGC).</title>
        <authorList>
            <consortium name="The MGC Project Team"/>
        </authorList>
    </citation>
    <scope>NUCLEOTIDE SEQUENCE [LARGE SCALE MRNA] (ISOFORMS 1 AND 2)</scope>
    <source>
        <tissue>Brain</tissue>
    </source>
</reference>
<reference key="5">
    <citation type="journal article" date="2015" name="Biol. Reprod.">
        <title>Combining RNA and protein profiling data with network interactions identifies genes associated with spermatogenesis in mouse and human.</title>
        <authorList>
            <person name="Petit F.G."/>
            <person name="Kervarrec C."/>
            <person name="Jamin S.P."/>
            <person name="Smagulova F."/>
            <person name="Hao C."/>
            <person name="Becker E."/>
            <person name="Jegou B."/>
            <person name="Chalmel F."/>
            <person name="Primig M."/>
        </authorList>
    </citation>
    <scope>TISSUE SPECIFICITY</scope>
    <scope>SUBCELLULAR LOCATION</scope>
</reference>
<reference key="6">
    <citation type="journal article" date="2021" name="PLoS Genet.">
        <title>FOXR1 regulates stress response pathways and is necessary for proper brain development.</title>
        <authorList>
            <person name="Mota A."/>
            <person name="Waxman H.K."/>
            <person name="Hong R."/>
            <person name="Lagani G.D."/>
            <person name="Niu S.Y."/>
            <person name="Bertherat F.L."/>
            <person name="Wolfe L."/>
            <person name="Malicdan C.M."/>
            <person name="Markello T.C."/>
            <person name="Adams D.R."/>
            <person name="Gahl W.A."/>
            <person name="Cheng C.S."/>
            <person name="Beffert U."/>
            <person name="Ho A."/>
        </authorList>
    </citation>
    <scope>FUNCTION</scope>
    <scope>SUBCELLULAR LOCATION</scope>
    <scope>INDUCTION</scope>
    <scope>CHARACTERIZATION OF VARIANT LEU-280</scope>
    <scope>MUTAGENESIS OF 280-MET--LEU-292</scope>
</reference>
<comment type="function">
    <text evidence="1 5">Transcription factor which acts as both an activator and a repressor (PubMed:34723967). Activates transcription of a number of genes including the heat shock chaperones HSPA1A and HSPA6 and the antioxidant NADPH-dependent reductase DHRS2 which are involved in protection against oxidative stress (PubMed:34723967). Required for normal brain development (By similarity).</text>
</comment>
<comment type="interaction">
    <interactant intactId="EBI-10253815">
        <id>Q6PIV2</id>
    </interactant>
    <interactant intactId="EBI-640741">
        <id>P01023</id>
        <label>A2M</label>
    </interactant>
    <organismsDiffer>false</organismsDiffer>
    <experiments>3</experiments>
</comment>
<comment type="interaction">
    <interactant intactId="EBI-10253815">
        <id>Q6PIV2</id>
    </interactant>
    <interactant intactId="EBI-21535880">
        <id>Q92870-2</id>
        <label>APBB2</label>
    </interactant>
    <organismsDiffer>false</organismsDiffer>
    <experiments>3</experiments>
</comment>
<comment type="interaction">
    <interactant intactId="EBI-10253815">
        <id>Q6PIV2</id>
    </interactant>
    <interactant intactId="EBI-744695">
        <id>Q8N9N5</id>
        <label>BANP</label>
    </interactant>
    <organismsDiffer>false</organismsDiffer>
    <experiments>3</experiments>
</comment>
<comment type="interaction">
    <interactant intactId="EBI-10253815">
        <id>Q6PIV2</id>
    </interactant>
    <interactant intactId="EBI-11524452">
        <id>Q8N9N5-2</id>
        <label>BANP</label>
    </interactant>
    <organismsDiffer>false</organismsDiffer>
    <experiments>3</experiments>
</comment>
<comment type="interaction">
    <interactant intactId="EBI-10253815">
        <id>Q6PIV2</id>
    </interactant>
    <interactant intactId="EBI-741885">
        <id>Q96LK0</id>
        <label>CEP19</label>
    </interactant>
    <organismsDiffer>false</organismsDiffer>
    <experiments>3</experiments>
</comment>
<comment type="interaction">
    <interactant intactId="EBI-10253815">
        <id>Q6PIV2</id>
    </interactant>
    <interactant intactId="EBI-10976677">
        <id>G5E9A7</id>
        <label>DMWD</label>
    </interactant>
    <organismsDiffer>false</organismsDiffer>
    <experiments>3</experiments>
</comment>
<comment type="interaction">
    <interactant intactId="EBI-10253815">
        <id>Q6PIV2</id>
    </interactant>
    <interactant intactId="EBI-10968534">
        <id>P50570-2</id>
        <label>DNM2</label>
    </interactant>
    <organismsDiffer>false</organismsDiffer>
    <experiments>3</experiments>
</comment>
<comment type="interaction">
    <interactant intactId="EBI-10253815">
        <id>Q6PIV2</id>
    </interactant>
    <interactant intactId="EBI-710457">
        <id>Q7L190</id>
        <label>DPPA4</label>
    </interactant>
    <organismsDiffer>false</organismsDiffer>
    <experiments>3</experiments>
</comment>
<comment type="interaction">
    <interactant intactId="EBI-10253815">
        <id>Q6PIV2</id>
    </interactant>
    <interactant intactId="EBI-10172181">
        <id>Q53SE7</id>
        <label>FLJ13057</label>
    </interactant>
    <organismsDiffer>false</organismsDiffer>
    <experiments>3</experiments>
</comment>
<comment type="interaction">
    <interactant intactId="EBI-10253815">
        <id>Q6PIV2</id>
    </interactant>
    <interactant intactId="EBI-11110431">
        <id>Q8TB36</id>
        <label>GDAP1</label>
    </interactant>
    <organismsDiffer>false</organismsDiffer>
    <experiments>3</experiments>
</comment>
<comment type="interaction">
    <interactant intactId="EBI-10253815">
        <id>Q6PIV2</id>
    </interactant>
    <interactant intactId="EBI-2548508">
        <id>Q96IK5</id>
        <label>GMCL1</label>
    </interactant>
    <organismsDiffer>false</organismsDiffer>
    <experiments>3</experiments>
</comment>
<comment type="interaction">
    <interactant intactId="EBI-10253815">
        <id>Q6PIV2</id>
    </interactant>
    <interactant intactId="EBI-466029">
        <id>P42858</id>
        <label>HTT</label>
    </interactant>
    <organismsDiffer>false</organismsDiffer>
    <experiments>12</experiments>
</comment>
<comment type="interaction">
    <interactant intactId="EBI-10253815">
        <id>Q6PIV2</id>
    </interactant>
    <interactant intactId="EBI-1189067">
        <id>P51608</id>
        <label>MECP2</label>
    </interactant>
    <organismsDiffer>false</organismsDiffer>
    <experiments>3</experiments>
</comment>
<comment type="interaction">
    <interactant intactId="EBI-10253815">
        <id>Q6PIV2</id>
    </interactant>
    <interactant intactId="EBI-748397">
        <id>P50222</id>
        <label>MEOX2</label>
    </interactant>
    <organismsDiffer>false</organismsDiffer>
    <experiments>3</experiments>
</comment>
<comment type="interaction">
    <interactant intactId="EBI-10253815">
        <id>Q6PIV2</id>
    </interactant>
    <interactant intactId="EBI-752057">
        <id>Q7Z412</id>
        <label>PEX26</label>
    </interactant>
    <organismsDiffer>false</organismsDiffer>
    <experiments>3</experiments>
</comment>
<comment type="interaction">
    <interactant intactId="EBI-10253815">
        <id>Q6PIV2</id>
    </interactant>
    <interactant intactId="EBI-50433196">
        <id>A0A6Q8PF08</id>
        <label>PMP22</label>
    </interactant>
    <organismsDiffer>false</organismsDiffer>
    <experiments>3</experiments>
</comment>
<comment type="interaction">
    <interactant intactId="EBI-10253815">
        <id>Q6PIV2</id>
    </interactant>
    <interactant intactId="EBI-724333">
        <id>Q96CD2</id>
        <label>PPCDC</label>
    </interactant>
    <organismsDiffer>false</organismsDiffer>
    <experiments>10</experiments>
</comment>
<comment type="interaction">
    <interactant intactId="EBI-10253815">
        <id>Q6PIV2</id>
    </interactant>
    <interactant intactId="EBI-395421">
        <id>Q16637</id>
        <label>SMN2</label>
    </interactant>
    <organismsDiffer>false</organismsDiffer>
    <experiments>3</experiments>
</comment>
<comment type="interaction">
    <interactant intactId="EBI-10253815">
        <id>Q6PIV2</id>
    </interactant>
    <interactant intactId="EBI-985879">
        <id>P37840</id>
        <label>SNCA</label>
    </interactant>
    <organismsDiffer>false</organismsDiffer>
    <experiments>3</experiments>
</comment>
<comment type="interaction">
    <interactant intactId="EBI-10253815">
        <id>Q6PIV2</id>
    </interactant>
    <interactant intactId="EBI-25847109">
        <id>O14656-2</id>
        <label>TOR1A</label>
    </interactant>
    <organismsDiffer>false</organismsDiffer>
    <experiments>3</experiments>
</comment>
<comment type="interaction">
    <interactant intactId="EBI-10253815">
        <id>Q6PIV2</id>
    </interactant>
    <interactant intactId="EBI-12806590">
        <id>Q86WV8</id>
        <label>TSC1</label>
    </interactant>
    <organismsDiffer>false</organismsDiffer>
    <experiments>3</experiments>
</comment>
<comment type="subcellular location">
    <subcellularLocation>
        <location evidence="5">Nucleus</location>
    </subcellularLocation>
    <subcellularLocation>
        <location evidence="4 5">Cytoplasm</location>
    </subcellularLocation>
    <subcellularLocation>
        <location evidence="4">Cytoplasm</location>
        <location evidence="4">Perinuclear region</location>
    </subcellularLocation>
    <text evidence="4 5">Localizes to the nucleus and cytoplasm with higher levels in the nucleus where it is expressed in a diffuse manner (PubMed:34723967). Located in the cytoplasm of spermatocytes and strongly accumulates at the perinuclear region in elongated spermatids (PubMed:25609838).</text>
</comment>
<comment type="alternative products">
    <event type="alternative splicing"/>
    <isoform>
        <id>Q6PIV2-1</id>
        <name>1</name>
        <sequence type="displayed"/>
    </isoform>
    <isoform>
        <id>Q6PIV2-2</id>
        <name>2</name>
        <sequence type="described" ref="VSP_056600 VSP_056601"/>
    </isoform>
</comment>
<comment type="tissue specificity">
    <text evidence="4">Expressed in testis (at protein level).</text>
</comment>
<comment type="induction">
    <text evidence="5">Induced by cellular stress.</text>
</comment>
<comment type="disease">
    <text evidence="5">Defects in FOXR1 may be the cause of a severe neurological disorder characterized by postnatal microcephaly, progressive brain atrophy and global developmental delay.</text>
</comment>
<keyword id="KW-0010">Activator</keyword>
<keyword id="KW-0025">Alternative splicing</keyword>
<keyword id="KW-0963">Cytoplasm</keyword>
<keyword id="KW-0238">DNA-binding</keyword>
<keyword id="KW-0539">Nucleus</keyword>
<keyword id="KW-1185">Reference proteome</keyword>
<keyword id="KW-0678">Repressor</keyword>
<keyword id="KW-0804">Transcription</keyword>
<keyword id="KW-0805">Transcription regulation</keyword>
<gene>
    <name type="primary">FOXR1</name>
    <name type="synonym">FOXN5</name>
    <name type="ORF">DLNB13</name>
</gene>
<name>FOXR1_HUMAN</name>
<organism>
    <name type="scientific">Homo sapiens</name>
    <name type="common">Human</name>
    <dbReference type="NCBI Taxonomy" id="9606"/>
    <lineage>
        <taxon>Eukaryota</taxon>
        <taxon>Metazoa</taxon>
        <taxon>Chordata</taxon>
        <taxon>Craniata</taxon>
        <taxon>Vertebrata</taxon>
        <taxon>Euteleostomi</taxon>
        <taxon>Mammalia</taxon>
        <taxon>Eutheria</taxon>
        <taxon>Euarchontoglires</taxon>
        <taxon>Primates</taxon>
        <taxon>Haplorrhini</taxon>
        <taxon>Catarrhini</taxon>
        <taxon>Hominidae</taxon>
        <taxon>Homo</taxon>
    </lineage>
</organism>
<evidence type="ECO:0000250" key="1">
    <source>
        <dbReference type="UniProtKB" id="Q3UTB7"/>
    </source>
</evidence>
<evidence type="ECO:0000255" key="2">
    <source>
        <dbReference type="PROSITE-ProRule" id="PRU00089"/>
    </source>
</evidence>
<evidence type="ECO:0000256" key="3">
    <source>
        <dbReference type="SAM" id="MobiDB-lite"/>
    </source>
</evidence>
<evidence type="ECO:0000269" key="4">
    <source>
    </source>
</evidence>
<evidence type="ECO:0000269" key="5">
    <source>
    </source>
</evidence>
<evidence type="ECO:0000303" key="6">
    <source>
    </source>
</evidence>
<feature type="chain" id="PRO_0000253778" description="Forkhead box protein R1">
    <location>
        <begin position="1"/>
        <end position="292"/>
    </location>
</feature>
<feature type="DNA-binding region" description="Fork-head" evidence="2">
    <location>
        <begin position="173"/>
        <end position="272"/>
    </location>
</feature>
<feature type="region of interest" description="Disordered" evidence="3">
    <location>
        <begin position="31"/>
        <end position="50"/>
    </location>
</feature>
<feature type="region of interest" description="Disordered" evidence="3">
    <location>
        <begin position="65"/>
        <end position="166"/>
    </location>
</feature>
<feature type="compositionally biased region" description="Basic and acidic residues" evidence="3">
    <location>
        <begin position="35"/>
        <end position="47"/>
    </location>
</feature>
<feature type="compositionally biased region" description="Basic and acidic residues" evidence="3">
    <location>
        <begin position="70"/>
        <end position="79"/>
    </location>
</feature>
<feature type="compositionally biased region" description="Polar residues" evidence="3">
    <location>
        <begin position="80"/>
        <end position="89"/>
    </location>
</feature>
<feature type="compositionally biased region" description="Acidic residues" evidence="3">
    <location>
        <begin position="129"/>
        <end position="140"/>
    </location>
</feature>
<feature type="compositionally biased region" description="Basic residues" evidence="3">
    <location>
        <begin position="149"/>
        <end position="161"/>
    </location>
</feature>
<feature type="splice variant" id="VSP_056600" description="In isoform 2." evidence="6">
    <original>LTEEEEAEDQEDSSSMALPSPHKRAPLQSRRLRQASSQAGRLWSRPPLNYFHLIALALRNSSPCGLNVQQIYSFTRK</original>
    <variation>GPPPESEASASQQPGGEALVPAPSQLLPPNCPGIKKQFPLWPQRATDLQFHSELLGLILLCSCCGPSPGPSEGGRVQ</variation>
    <location>
        <begin position="129"/>
        <end position="205"/>
    </location>
</feature>
<feature type="splice variant" id="VSP_056601" description="In isoform 2." evidence="6">
    <location>
        <begin position="206"/>
        <end position="291"/>
    </location>
</feature>
<feature type="sequence variant" id="VAR_086656" description="Found in a patient with a severe neurological disorder; uncertain significance; reduced protein expression due to protein instability; protein misfolding; formation of nuclear puncta in some cells; loss of activation of HSPA1A, HSPA6 and DHRS2." evidence="5">
    <original>M</original>
    <variation>L</variation>
    <location>
        <position position="280"/>
    </location>
</feature>
<feature type="mutagenesis site" description="Reduced protein expression and formation of nuclear puncta in some cells." evidence="5">
    <location>
        <begin position="280"/>
        <end position="292"/>
    </location>
</feature>
<sequence>MGNELFLAFTTSHLPLAEQKLARYKLRIVKPPKLPLEKKPNPDKDGPDYEPNLWMWVNPNIVYPPGKLEVSGRRKREDLTSTLPSSQPPQKEEDASCSEAAGVESLSQSSSKRSPPRKRFAFSPSTWELTEEEEAEDQEDSSSMALPSPHKRAPLQSRRLRQASSQAGRLWSRPPLNYFHLIALALRNSSPCGLNVQQIYSFTRKHFPFFRTAPEGWKNTVRHNLCFRDSFEKVPVSMQGGASTRPRSCLWKLTEEGHRRFAEEARALASTRLESIQQCMSQPDVMPFLFDL</sequence>
<dbReference type="EMBL" id="AB094092">
    <property type="protein sequence ID" value="BAC76046.1"/>
    <property type="molecule type" value="mRNA"/>
</dbReference>
<dbReference type="EMBL" id="EF444979">
    <property type="protein sequence ID" value="ACA05993.1"/>
    <property type="molecule type" value="Genomic_DNA"/>
</dbReference>
<dbReference type="EMBL" id="AP003392">
    <property type="status" value="NOT_ANNOTATED_CDS"/>
    <property type="molecule type" value="Genomic_DNA"/>
</dbReference>
<dbReference type="EMBL" id="AP004609">
    <property type="status" value="NOT_ANNOTATED_CDS"/>
    <property type="molecule type" value="Genomic_DNA"/>
</dbReference>
<dbReference type="EMBL" id="BC028191">
    <property type="protein sequence ID" value="AAH28191.2"/>
    <property type="molecule type" value="mRNA"/>
</dbReference>
<dbReference type="EMBL" id="BC038969">
    <property type="protein sequence ID" value="AAH38969.2"/>
    <property type="molecule type" value="mRNA"/>
</dbReference>
<dbReference type="EMBL" id="BC125040">
    <property type="protein sequence ID" value="AAI25041.1"/>
    <property type="molecule type" value="mRNA"/>
</dbReference>
<dbReference type="CCDS" id="CCDS31688.1">
    <molecule id="Q6PIV2-1"/>
</dbReference>
<dbReference type="RefSeq" id="NP_859072.1">
    <molecule id="Q6PIV2-1"/>
    <property type="nucleotide sequence ID" value="NM_181721.3"/>
</dbReference>
<dbReference type="SMR" id="Q6PIV2"/>
<dbReference type="BioGRID" id="129476">
    <property type="interactions" value="48"/>
</dbReference>
<dbReference type="FunCoup" id="Q6PIV2">
    <property type="interactions" value="218"/>
</dbReference>
<dbReference type="IntAct" id="Q6PIV2">
    <property type="interactions" value="55"/>
</dbReference>
<dbReference type="MINT" id="Q6PIV2"/>
<dbReference type="STRING" id="9606.ENSP00000314806"/>
<dbReference type="GlyGen" id="Q6PIV2">
    <property type="glycosylation" value="1 site, 1 O-linked glycan (1 site)"/>
</dbReference>
<dbReference type="iPTMnet" id="Q6PIV2"/>
<dbReference type="PhosphoSitePlus" id="Q6PIV2"/>
<dbReference type="BioMuta" id="FOXR1"/>
<dbReference type="DMDM" id="116247781"/>
<dbReference type="MassIVE" id="Q6PIV2"/>
<dbReference type="PaxDb" id="9606-ENSP00000314806"/>
<dbReference type="PeptideAtlas" id="Q6PIV2"/>
<dbReference type="Antibodypedia" id="32552">
    <property type="antibodies" value="96 antibodies from 25 providers"/>
</dbReference>
<dbReference type="DNASU" id="283150"/>
<dbReference type="Ensembl" id="ENST00000317011.8">
    <molecule id="Q6PIV2-1"/>
    <property type="protein sequence ID" value="ENSP00000314806.3"/>
    <property type="gene ID" value="ENSG00000176302.13"/>
</dbReference>
<dbReference type="Ensembl" id="ENST00000531539.5">
    <molecule id="Q6PIV2-2"/>
    <property type="protein sequence ID" value="ENSP00000433394.1"/>
    <property type="gene ID" value="ENSG00000176302.13"/>
</dbReference>
<dbReference type="GeneID" id="283150"/>
<dbReference type="KEGG" id="hsa:283150"/>
<dbReference type="MANE-Select" id="ENST00000317011.8">
    <property type="protein sequence ID" value="ENSP00000314806.3"/>
    <property type="RefSeq nucleotide sequence ID" value="NM_181721.3"/>
    <property type="RefSeq protein sequence ID" value="NP_859072.1"/>
</dbReference>
<dbReference type="UCSC" id="uc001pui.4">
    <molecule id="Q6PIV2-1"/>
    <property type="organism name" value="human"/>
</dbReference>
<dbReference type="AGR" id="HGNC:29980"/>
<dbReference type="CTD" id="283150"/>
<dbReference type="DisGeNET" id="283150"/>
<dbReference type="GeneCards" id="FOXR1"/>
<dbReference type="HGNC" id="HGNC:29980">
    <property type="gene designation" value="FOXR1"/>
</dbReference>
<dbReference type="HPA" id="ENSG00000176302">
    <property type="expression patterns" value="Tissue enriched (testis)"/>
</dbReference>
<dbReference type="MIM" id="615755">
    <property type="type" value="gene"/>
</dbReference>
<dbReference type="neXtProt" id="NX_Q6PIV2"/>
<dbReference type="OpenTargets" id="ENSG00000176302"/>
<dbReference type="PharmGKB" id="PA134959382"/>
<dbReference type="VEuPathDB" id="HostDB:ENSG00000176302"/>
<dbReference type="eggNOG" id="KOG2294">
    <property type="taxonomic scope" value="Eukaryota"/>
</dbReference>
<dbReference type="GeneTree" id="ENSGT00940000162579"/>
<dbReference type="HOGENOM" id="CLU_077699_3_1_1"/>
<dbReference type="InParanoid" id="Q6PIV2"/>
<dbReference type="OMA" id="IQRCMSQ"/>
<dbReference type="OrthoDB" id="10070006at2759"/>
<dbReference type="PAN-GO" id="Q6PIV2">
    <property type="GO annotations" value="2 GO annotations based on evolutionary models"/>
</dbReference>
<dbReference type="PhylomeDB" id="Q6PIV2"/>
<dbReference type="TreeFam" id="TF329867"/>
<dbReference type="PathwayCommons" id="Q6PIV2"/>
<dbReference type="SignaLink" id="Q6PIV2"/>
<dbReference type="BioGRID-ORCS" id="283150">
    <property type="hits" value="10 hits in 1167 CRISPR screens"/>
</dbReference>
<dbReference type="ChiTaRS" id="FOXR1">
    <property type="organism name" value="human"/>
</dbReference>
<dbReference type="GenomeRNAi" id="283150"/>
<dbReference type="Pharos" id="Q6PIV2">
    <property type="development level" value="Tbio"/>
</dbReference>
<dbReference type="PRO" id="PR:Q6PIV2"/>
<dbReference type="Proteomes" id="UP000005640">
    <property type="component" value="Chromosome 11"/>
</dbReference>
<dbReference type="RNAct" id="Q6PIV2">
    <property type="molecule type" value="protein"/>
</dbReference>
<dbReference type="Bgee" id="ENSG00000176302">
    <property type="expression patterns" value="Expressed in primordial germ cell in gonad and 44 other cell types or tissues"/>
</dbReference>
<dbReference type="ExpressionAtlas" id="Q6PIV2">
    <property type="expression patterns" value="baseline and differential"/>
</dbReference>
<dbReference type="GO" id="GO:0000785">
    <property type="term" value="C:chromatin"/>
    <property type="evidence" value="ECO:0000247"/>
    <property type="project" value="NTNU_SB"/>
</dbReference>
<dbReference type="GO" id="GO:0005737">
    <property type="term" value="C:cytoplasm"/>
    <property type="evidence" value="ECO:0000314"/>
    <property type="project" value="UniProtKB"/>
</dbReference>
<dbReference type="GO" id="GO:0005634">
    <property type="term" value="C:nucleus"/>
    <property type="evidence" value="ECO:0000314"/>
    <property type="project" value="UniProtKB"/>
</dbReference>
<dbReference type="GO" id="GO:0048471">
    <property type="term" value="C:perinuclear region of cytoplasm"/>
    <property type="evidence" value="ECO:0007669"/>
    <property type="project" value="UniProtKB-SubCell"/>
</dbReference>
<dbReference type="GO" id="GO:0001228">
    <property type="term" value="F:DNA-binding transcription activator activity, RNA polymerase II-specific"/>
    <property type="evidence" value="ECO:0000314"/>
    <property type="project" value="UniProtKB"/>
</dbReference>
<dbReference type="GO" id="GO:0000981">
    <property type="term" value="F:DNA-binding transcription factor activity, RNA polymerase II-specific"/>
    <property type="evidence" value="ECO:0000247"/>
    <property type="project" value="NTNU_SB"/>
</dbReference>
<dbReference type="GO" id="GO:0001227">
    <property type="term" value="F:DNA-binding transcription repressor activity, RNA polymerase II-specific"/>
    <property type="evidence" value="ECO:0000314"/>
    <property type="project" value="UniProtKB"/>
</dbReference>
<dbReference type="GO" id="GO:1990837">
    <property type="term" value="F:sequence-specific double-stranded DNA binding"/>
    <property type="evidence" value="ECO:0000318"/>
    <property type="project" value="GO_Central"/>
</dbReference>
<dbReference type="GO" id="GO:0007420">
    <property type="term" value="P:brain development"/>
    <property type="evidence" value="ECO:0000250"/>
    <property type="project" value="UniProtKB"/>
</dbReference>
<dbReference type="GO" id="GO:0045944">
    <property type="term" value="P:positive regulation of transcription by RNA polymerase II"/>
    <property type="evidence" value="ECO:0000314"/>
    <property type="project" value="UniProtKB"/>
</dbReference>
<dbReference type="GO" id="GO:0006357">
    <property type="term" value="P:regulation of transcription by RNA polymerase II"/>
    <property type="evidence" value="ECO:0000314"/>
    <property type="project" value="UniProtKB"/>
</dbReference>
<dbReference type="CDD" id="cd20036">
    <property type="entry name" value="FH_FOXR"/>
    <property type="match status" value="1"/>
</dbReference>
<dbReference type="FunFam" id="1.10.10.10:FF:000505">
    <property type="entry name" value="Forkhead box R1"/>
    <property type="match status" value="1"/>
</dbReference>
<dbReference type="Gene3D" id="1.10.10.10">
    <property type="entry name" value="Winged helix-like DNA-binding domain superfamily/Winged helix DNA-binding domain"/>
    <property type="match status" value="1"/>
</dbReference>
<dbReference type="InterPro" id="IPR001766">
    <property type="entry name" value="Fork_head_dom"/>
</dbReference>
<dbReference type="InterPro" id="IPR052328">
    <property type="entry name" value="FOX_transcription_regulators"/>
</dbReference>
<dbReference type="InterPro" id="IPR036388">
    <property type="entry name" value="WH-like_DNA-bd_sf"/>
</dbReference>
<dbReference type="InterPro" id="IPR036390">
    <property type="entry name" value="WH_DNA-bd_sf"/>
</dbReference>
<dbReference type="PANTHER" id="PTHR46789">
    <property type="entry name" value="FORKHEAD BOX PROTEIN R1"/>
    <property type="match status" value="1"/>
</dbReference>
<dbReference type="PANTHER" id="PTHR46789:SF1">
    <property type="entry name" value="FORKHEAD BOX PROTEIN R1"/>
    <property type="match status" value="1"/>
</dbReference>
<dbReference type="Pfam" id="PF00250">
    <property type="entry name" value="Forkhead"/>
    <property type="match status" value="1"/>
</dbReference>
<dbReference type="PRINTS" id="PR00053">
    <property type="entry name" value="FORKHEAD"/>
</dbReference>
<dbReference type="SMART" id="SM00339">
    <property type="entry name" value="FH"/>
    <property type="match status" value="1"/>
</dbReference>
<dbReference type="SUPFAM" id="SSF46785">
    <property type="entry name" value="Winged helix' DNA-binding domain"/>
    <property type="match status" value="1"/>
</dbReference>
<dbReference type="PROSITE" id="PS50039">
    <property type="entry name" value="FORK_HEAD_3"/>
    <property type="match status" value="1"/>
</dbReference>
<protein>
    <recommendedName>
        <fullName>Forkhead box protein R1</fullName>
    </recommendedName>
    <alternativeName>
        <fullName>Forkhead box protein N5</fullName>
    </alternativeName>
</protein>
<proteinExistence type="evidence at protein level"/>